<gene>
    <name evidence="1" type="primary">bpt</name>
    <name type="ordered locus">VP1017</name>
</gene>
<dbReference type="EC" id="2.3.2.29" evidence="1"/>
<dbReference type="EMBL" id="BA000031">
    <property type="protein sequence ID" value="BAC59280.1"/>
    <property type="molecule type" value="Genomic_DNA"/>
</dbReference>
<dbReference type="RefSeq" id="NP_797396.1">
    <property type="nucleotide sequence ID" value="NC_004603.1"/>
</dbReference>
<dbReference type="RefSeq" id="WP_005457240.1">
    <property type="nucleotide sequence ID" value="NC_004603.1"/>
</dbReference>
<dbReference type="SMR" id="Q87QY2"/>
<dbReference type="GeneID" id="1188521"/>
<dbReference type="KEGG" id="vpa:VP1017"/>
<dbReference type="PATRIC" id="fig|223926.6.peg.964"/>
<dbReference type="eggNOG" id="COG2935">
    <property type="taxonomic scope" value="Bacteria"/>
</dbReference>
<dbReference type="HOGENOM" id="CLU_077607_0_0_6"/>
<dbReference type="Proteomes" id="UP000002493">
    <property type="component" value="Chromosome 1"/>
</dbReference>
<dbReference type="GO" id="GO:0005737">
    <property type="term" value="C:cytoplasm"/>
    <property type="evidence" value="ECO:0007669"/>
    <property type="project" value="UniProtKB-SubCell"/>
</dbReference>
<dbReference type="GO" id="GO:0004057">
    <property type="term" value="F:arginyl-tRNA--protein transferase activity"/>
    <property type="evidence" value="ECO:0007669"/>
    <property type="project" value="InterPro"/>
</dbReference>
<dbReference type="GO" id="GO:0008914">
    <property type="term" value="F:leucyl-tRNA--protein transferase activity"/>
    <property type="evidence" value="ECO:0007669"/>
    <property type="project" value="UniProtKB-UniRule"/>
</dbReference>
<dbReference type="GO" id="GO:0071596">
    <property type="term" value="P:ubiquitin-dependent protein catabolic process via the N-end rule pathway"/>
    <property type="evidence" value="ECO:0007669"/>
    <property type="project" value="InterPro"/>
</dbReference>
<dbReference type="HAMAP" id="MF_00689">
    <property type="entry name" value="Bpt"/>
    <property type="match status" value="1"/>
</dbReference>
<dbReference type="InterPro" id="IPR016181">
    <property type="entry name" value="Acyl_CoA_acyltransferase"/>
</dbReference>
<dbReference type="InterPro" id="IPR017138">
    <property type="entry name" value="Asp_Glu_LeuTrfase"/>
</dbReference>
<dbReference type="InterPro" id="IPR030700">
    <property type="entry name" value="N-end_Aminoacyl_Trfase"/>
</dbReference>
<dbReference type="InterPro" id="IPR007472">
    <property type="entry name" value="N-end_Aminoacyl_Trfase_C"/>
</dbReference>
<dbReference type="InterPro" id="IPR007471">
    <property type="entry name" value="N-end_Aminoacyl_Trfase_N"/>
</dbReference>
<dbReference type="NCBIfam" id="NF002342">
    <property type="entry name" value="PRK01305.1-3"/>
    <property type="match status" value="1"/>
</dbReference>
<dbReference type="NCBIfam" id="NF002345">
    <property type="entry name" value="PRK01305.2-2"/>
    <property type="match status" value="1"/>
</dbReference>
<dbReference type="NCBIfam" id="NF002346">
    <property type="entry name" value="PRK01305.2-3"/>
    <property type="match status" value="1"/>
</dbReference>
<dbReference type="PANTHER" id="PTHR21367">
    <property type="entry name" value="ARGININE-TRNA-PROTEIN TRANSFERASE 1"/>
    <property type="match status" value="1"/>
</dbReference>
<dbReference type="PANTHER" id="PTHR21367:SF1">
    <property type="entry name" value="ARGINYL-TRNA--PROTEIN TRANSFERASE 1"/>
    <property type="match status" value="1"/>
</dbReference>
<dbReference type="Pfam" id="PF04377">
    <property type="entry name" value="ATE_C"/>
    <property type="match status" value="1"/>
</dbReference>
<dbReference type="Pfam" id="PF04376">
    <property type="entry name" value="ATE_N"/>
    <property type="match status" value="1"/>
</dbReference>
<dbReference type="PIRSF" id="PIRSF037208">
    <property type="entry name" value="ATE_pro_prd"/>
    <property type="match status" value="1"/>
</dbReference>
<dbReference type="SUPFAM" id="SSF55729">
    <property type="entry name" value="Acyl-CoA N-acyltransferases (Nat)"/>
    <property type="match status" value="1"/>
</dbReference>
<proteinExistence type="inferred from homology"/>
<sequence length="233" mass="27643">MSTDLQHIRIGLTNNHPCSYLPERQERVAVALDAELHTEQNYQLLMANGFRRSGDTIYKPHCERCHACQPIRISIPDFVLSRSQKRLLSKAKSLRWEMKTEMDAEWFELYSRYICKRHKNGTMYPPKRDEFSRFAQTTWLTTLFLHIYDESNQLLGVAVTDVMAQCSSAFYTFFEPDYPLSLGTLAVLYQVNYCQQNNEQWLYLGYQIDECPAMNYKTRFQRHQRLVNQRWQG</sequence>
<feature type="chain" id="PRO_0000195118" description="Aspartate/glutamate leucyltransferase">
    <location>
        <begin position="1"/>
        <end position="233"/>
    </location>
</feature>
<keyword id="KW-0012">Acyltransferase</keyword>
<keyword id="KW-0963">Cytoplasm</keyword>
<keyword id="KW-0808">Transferase</keyword>
<comment type="function">
    <text evidence="1">Functions in the N-end rule pathway of protein degradation where it conjugates Leu from its aminoacyl-tRNA to the N-termini of proteins containing an N-terminal aspartate or glutamate.</text>
</comment>
<comment type="catalytic activity">
    <reaction evidence="1">
        <text>N-terminal L-glutamyl-[protein] + L-leucyl-tRNA(Leu) = N-terminal L-leucyl-L-glutamyl-[protein] + tRNA(Leu) + H(+)</text>
        <dbReference type="Rhea" id="RHEA:50412"/>
        <dbReference type="Rhea" id="RHEA-COMP:9613"/>
        <dbReference type="Rhea" id="RHEA-COMP:9622"/>
        <dbReference type="Rhea" id="RHEA-COMP:12664"/>
        <dbReference type="Rhea" id="RHEA-COMP:12668"/>
        <dbReference type="ChEBI" id="CHEBI:15378"/>
        <dbReference type="ChEBI" id="CHEBI:64721"/>
        <dbReference type="ChEBI" id="CHEBI:78442"/>
        <dbReference type="ChEBI" id="CHEBI:78494"/>
        <dbReference type="ChEBI" id="CHEBI:133041"/>
        <dbReference type="EC" id="2.3.2.29"/>
    </reaction>
</comment>
<comment type="catalytic activity">
    <reaction evidence="1">
        <text>N-terminal L-aspartyl-[protein] + L-leucyl-tRNA(Leu) = N-terminal L-leucyl-L-aspartyl-[protein] + tRNA(Leu) + H(+)</text>
        <dbReference type="Rhea" id="RHEA:50420"/>
        <dbReference type="Rhea" id="RHEA-COMP:9613"/>
        <dbReference type="Rhea" id="RHEA-COMP:9622"/>
        <dbReference type="Rhea" id="RHEA-COMP:12669"/>
        <dbReference type="Rhea" id="RHEA-COMP:12674"/>
        <dbReference type="ChEBI" id="CHEBI:15378"/>
        <dbReference type="ChEBI" id="CHEBI:64720"/>
        <dbReference type="ChEBI" id="CHEBI:78442"/>
        <dbReference type="ChEBI" id="CHEBI:78494"/>
        <dbReference type="ChEBI" id="CHEBI:133042"/>
        <dbReference type="EC" id="2.3.2.29"/>
    </reaction>
</comment>
<comment type="subcellular location">
    <subcellularLocation>
        <location evidence="1">Cytoplasm</location>
    </subcellularLocation>
</comment>
<comment type="similarity">
    <text evidence="1">Belongs to the R-transferase family. Bpt subfamily.</text>
</comment>
<reference key="1">
    <citation type="journal article" date="2003" name="Lancet">
        <title>Genome sequence of Vibrio parahaemolyticus: a pathogenic mechanism distinct from that of V. cholerae.</title>
        <authorList>
            <person name="Makino K."/>
            <person name="Oshima K."/>
            <person name="Kurokawa K."/>
            <person name="Yokoyama K."/>
            <person name="Uda T."/>
            <person name="Tagomori K."/>
            <person name="Iijima Y."/>
            <person name="Najima M."/>
            <person name="Nakano M."/>
            <person name="Yamashita A."/>
            <person name="Kubota Y."/>
            <person name="Kimura S."/>
            <person name="Yasunaga T."/>
            <person name="Honda T."/>
            <person name="Shinagawa H."/>
            <person name="Hattori M."/>
            <person name="Iida T."/>
        </authorList>
    </citation>
    <scope>NUCLEOTIDE SEQUENCE [LARGE SCALE GENOMIC DNA]</scope>
    <source>
        <strain>RIMD 2210633</strain>
    </source>
</reference>
<protein>
    <recommendedName>
        <fullName evidence="1">Aspartate/glutamate leucyltransferase</fullName>
        <ecNumber evidence="1">2.3.2.29</ecNumber>
    </recommendedName>
</protein>
<name>BPT_VIBPA</name>
<organism>
    <name type="scientific">Vibrio parahaemolyticus serotype O3:K6 (strain RIMD 2210633)</name>
    <dbReference type="NCBI Taxonomy" id="223926"/>
    <lineage>
        <taxon>Bacteria</taxon>
        <taxon>Pseudomonadati</taxon>
        <taxon>Pseudomonadota</taxon>
        <taxon>Gammaproteobacteria</taxon>
        <taxon>Vibrionales</taxon>
        <taxon>Vibrionaceae</taxon>
        <taxon>Vibrio</taxon>
    </lineage>
</organism>
<accession>Q87QY2</accession>
<evidence type="ECO:0000255" key="1">
    <source>
        <dbReference type="HAMAP-Rule" id="MF_00689"/>
    </source>
</evidence>